<keyword id="KW-0002">3D-structure</keyword>
<keyword id="KW-0229">DNA integration</keyword>
<keyword id="KW-0233">DNA recombination</keyword>
<keyword id="KW-0238">DNA-binding</keyword>
<keyword id="KW-0255">Endonuclease</keyword>
<keyword id="KW-0895">ERV</keyword>
<keyword id="KW-0378">Hydrolase</keyword>
<keyword id="KW-0479">Metal-binding</keyword>
<keyword id="KW-0511">Multifunctional enzyme</keyword>
<keyword id="KW-0540">Nuclease</keyword>
<keyword id="KW-0548">Nucleotidyltransferase</keyword>
<keyword id="KW-1185">Reference proteome</keyword>
<keyword id="KW-0688">Ribosomal frameshifting</keyword>
<keyword id="KW-0695">RNA-directed DNA polymerase</keyword>
<keyword id="KW-0808">Transferase</keyword>
<keyword id="KW-0814">Transposable element</keyword>
<keyword id="KW-0862">Zinc</keyword>
<keyword id="KW-0863">Zinc-finger</keyword>
<protein>
    <recommendedName>
        <fullName>Endogenous retrovirus group K member 11 Pol protein</fullName>
    </recommendedName>
    <alternativeName>
        <fullName>HERV-K_3q27.2 provirus ancestral Pol protein</fullName>
    </alternativeName>
    <domain>
        <recommendedName>
            <fullName>Reverse transcriptase</fullName>
            <shortName>RT</shortName>
            <ecNumber>2.7.7.49</ecNumber>
        </recommendedName>
    </domain>
    <domain>
        <recommendedName>
            <fullName>Ribonuclease H</fullName>
            <shortName>RNase H</shortName>
            <ecNumber>3.1.26.4</ecNumber>
        </recommendedName>
    </domain>
    <domain>
        <recommendedName>
            <fullName>Integrase</fullName>
            <shortName>IN</shortName>
        </recommendedName>
    </domain>
</protein>
<evidence type="ECO:0000250" key="1"/>
<evidence type="ECO:0000255" key="2">
    <source>
        <dbReference type="PROSITE-ProRule" id="PRU00405"/>
    </source>
</evidence>
<evidence type="ECO:0000255" key="3">
    <source>
        <dbReference type="PROSITE-ProRule" id="PRU00408"/>
    </source>
</evidence>
<evidence type="ECO:0000255" key="4">
    <source>
        <dbReference type="PROSITE-ProRule" id="PRU00450"/>
    </source>
</evidence>
<evidence type="ECO:0000255" key="5">
    <source>
        <dbReference type="PROSITE-ProRule" id="PRU00457"/>
    </source>
</evidence>
<evidence type="ECO:0000255" key="6">
    <source>
        <dbReference type="PROSITE-ProRule" id="PRU00506"/>
    </source>
</evidence>
<evidence type="ECO:0000305" key="7"/>
<evidence type="ECO:0007829" key="8">
    <source>
        <dbReference type="PDB" id="7SR6"/>
    </source>
</evidence>
<sequence>NKSRKRRNRVSFLGAATVEPPKPIPLTWKTEKPVWVNQWPLPKQKLEALHLLANEQLEKGHIEPSFSPWNSPVFVIQKKSGKWRMLTDLRAVNAVIQPMGPLQPGLPSPAMIPKDWPLIIIDLKDCFFTIPLAEQDCEKFAFTIPAINNKEPATRFQWKVLPQGMLNSPTICQTFVGRALQPVREKFSDCYIIHYIDDILCAAETKDKLIDCYTFLQAEVANAGLAIASDKIQTSTPFHYLGMQIENRKIKPQKIEIRKDTLKTLNDFQKLLGDINWIRPTLGIPTYAMSNLFSILRGDSDLNSKRILTPEATKEIKLVEEKIQSAQINRIDPLAPLQLLIFATAHSPTGIIIQNTDLVEWSFLPHSTVKTFTLYLDQIATLIGQTRLRIIKLCGNDPDKIVVPLTKEQVRQAFINSGAWQIGLANFVGIIDNHYPKTKIFQFLKMTTWILPKITRREPLENALTVFTDGSSNGKAAYTGPKERVIKTPYQSAQRAELVAVITVLQDFDQPINIISDSAYVVQATRDVETALIKYSMDDQLNQLFNLLQQTVRKRNFPFYITHIRAHTNLPGPLTKANEEADLLVSSALIKAQELHALTHVNAAGLKNKFDVTWKQAKDIVQHCTQCQVLHLPTQEAGVNPRGLCPNALWQMDVTHVPSFGRLSYVHVTVDTYSHFIWATCQTGESTSHVKKHLLSCFAVMGVPEKIKTDNGPGYCSKAFQKFLSQWKISHTTGIPYNSQGQAIVERTNRTLKTQLVKQKEGGDSKECTTPQMQLNLALYTLNFLNIYRNQTTTSAEQHLTGKKNSPHEGKLIWWKDNKNKTWEIGKVITWGRGFACVSPGENQLPVWIPTRHLKFYNEPIGDAKKRASTEMVTPVTWMDNPIEVYVNDSVWVPGPTDDRCPAKPEEEGMMINISIGYRYPPICLGRAPGCLMPTVQNWLVEVPIVSPICRFTYHMVSGMSLRPRVNYL</sequence>
<gene>
    <name type="primary">ERVK-11</name>
</gene>
<accession>Q9UQG0</accession>
<accession>Q6KH06</accession>
<accession>Q86YP3</accession>
<dbReference type="EC" id="2.7.7.49"/>
<dbReference type="EC" id="3.1.26.4"/>
<dbReference type="EMBL" id="AC099661">
    <property type="status" value="NOT_ANNOTATED_CDS"/>
    <property type="molecule type" value="Genomic_DNA"/>
</dbReference>
<dbReference type="EMBL" id="AF080229">
    <property type="protein sequence ID" value="AAC63290.1"/>
    <property type="molecule type" value="mRNA"/>
</dbReference>
<dbReference type="EMBL" id="AF080232">
    <property type="protein sequence ID" value="AAC63292.1"/>
    <property type="molecule type" value="mRNA"/>
</dbReference>
<dbReference type="EMBL" id="AY186778">
    <property type="protein sequence ID" value="AAO27434.1"/>
    <property type="molecule type" value="Genomic_DNA"/>
</dbReference>
<dbReference type="PDB" id="7SR6">
    <property type="method" value="X-ray"/>
    <property type="resolution" value="2.62 A"/>
    <property type="chains" value="A/B/F/G=2-597"/>
</dbReference>
<dbReference type="PDBsum" id="7SR6"/>
<dbReference type="SMR" id="Q9UQG0"/>
<dbReference type="FunCoup" id="Q9UQG0">
    <property type="interactions" value="6"/>
</dbReference>
<dbReference type="GlyGen" id="Q9UQG0">
    <property type="glycosylation" value="1 site"/>
</dbReference>
<dbReference type="BioMuta" id="HGNC:39006"/>
<dbReference type="DMDM" id="52000846"/>
<dbReference type="MassIVE" id="Q9UQG0"/>
<dbReference type="PeptideAtlas" id="Q9UQG0"/>
<dbReference type="GeneCards" id="ERVK-11"/>
<dbReference type="HGNC" id="HGNC:39006">
    <property type="gene designation" value="ERVK-11"/>
</dbReference>
<dbReference type="neXtProt" id="NX_Q9UQG0"/>
<dbReference type="InParanoid" id="Q9UQG0"/>
<dbReference type="PAN-GO" id="Q9UQG0">
    <property type="GO annotations" value="1 GO annotation based on evolutionary models"/>
</dbReference>
<dbReference type="PhylomeDB" id="Q9UQG0"/>
<dbReference type="Pharos" id="Q9UQG0">
    <property type="development level" value="Tdark"/>
</dbReference>
<dbReference type="PRO" id="PR:Q9UQG0"/>
<dbReference type="Proteomes" id="UP000005640">
    <property type="component" value="Unplaced"/>
</dbReference>
<dbReference type="RNAct" id="Q9UQG0">
    <property type="molecule type" value="protein"/>
</dbReference>
<dbReference type="GO" id="GO:0003677">
    <property type="term" value="F:DNA binding"/>
    <property type="evidence" value="ECO:0007669"/>
    <property type="project" value="UniProtKB-KW"/>
</dbReference>
<dbReference type="GO" id="GO:0035613">
    <property type="term" value="F:RNA stem-loop binding"/>
    <property type="evidence" value="ECO:0000318"/>
    <property type="project" value="GO_Central"/>
</dbReference>
<dbReference type="GO" id="GO:0003964">
    <property type="term" value="F:RNA-directed DNA polymerase activity"/>
    <property type="evidence" value="ECO:0007669"/>
    <property type="project" value="UniProtKB-KW"/>
</dbReference>
<dbReference type="GO" id="GO:0004523">
    <property type="term" value="F:RNA-DNA hybrid ribonuclease activity"/>
    <property type="evidence" value="ECO:0007669"/>
    <property type="project" value="UniProtKB-EC"/>
</dbReference>
<dbReference type="GO" id="GO:0008270">
    <property type="term" value="F:zinc ion binding"/>
    <property type="evidence" value="ECO:0007669"/>
    <property type="project" value="UniProtKB-KW"/>
</dbReference>
<dbReference type="GO" id="GO:0015074">
    <property type="term" value="P:DNA integration"/>
    <property type="evidence" value="ECO:0007669"/>
    <property type="project" value="UniProtKB-KW"/>
</dbReference>
<dbReference type="GO" id="GO:0006310">
    <property type="term" value="P:DNA recombination"/>
    <property type="evidence" value="ECO:0007669"/>
    <property type="project" value="UniProtKB-KW"/>
</dbReference>
<dbReference type="GO" id="GO:0000731">
    <property type="term" value="P:DNA synthesis involved in DNA repair"/>
    <property type="evidence" value="ECO:0007669"/>
    <property type="project" value="UniProtKB-ARBA"/>
</dbReference>
<dbReference type="GO" id="GO:0006261">
    <property type="term" value="P:DNA-templated DNA replication"/>
    <property type="evidence" value="ECO:0007669"/>
    <property type="project" value="UniProtKB-ARBA"/>
</dbReference>
<dbReference type="GO" id="GO:0075523">
    <property type="term" value="P:viral translational frameshifting"/>
    <property type="evidence" value="ECO:0007669"/>
    <property type="project" value="UniProtKB-KW"/>
</dbReference>
<dbReference type="CDD" id="cd09273">
    <property type="entry name" value="RNase_HI_RT_Bel"/>
    <property type="match status" value="1"/>
</dbReference>
<dbReference type="CDD" id="cd01645">
    <property type="entry name" value="RT_Rtv"/>
    <property type="match status" value="1"/>
</dbReference>
<dbReference type="FunFam" id="3.30.70.270:FF:000085">
    <property type="entry name" value="Endogenous retrovirus group K member 10 Pol protein"/>
    <property type="match status" value="1"/>
</dbReference>
<dbReference type="FunFam" id="3.30.420.10:FF:000145">
    <property type="entry name" value="Endogenous retrovirus group K member 18 Pol protein"/>
    <property type="match status" value="1"/>
</dbReference>
<dbReference type="FunFam" id="3.30.420.10:FF:000146">
    <property type="entry name" value="Endogenous retrovirus group K member 6 Pol protein"/>
    <property type="match status" value="1"/>
</dbReference>
<dbReference type="Gene3D" id="1.10.10.200">
    <property type="match status" value="1"/>
</dbReference>
<dbReference type="Gene3D" id="3.30.70.270">
    <property type="match status" value="2"/>
</dbReference>
<dbReference type="Gene3D" id="3.10.10.10">
    <property type="entry name" value="HIV Type 1 Reverse Transcriptase, subunit A, domain 1"/>
    <property type="match status" value="1"/>
</dbReference>
<dbReference type="Gene3D" id="2.30.30.10">
    <property type="entry name" value="Integrase, C-terminal domain superfamily, retroviral"/>
    <property type="match status" value="1"/>
</dbReference>
<dbReference type="Gene3D" id="3.30.420.10">
    <property type="entry name" value="Ribonuclease H-like superfamily/Ribonuclease H"/>
    <property type="match status" value="2"/>
</dbReference>
<dbReference type="InterPro" id="IPR043502">
    <property type="entry name" value="DNA/RNA_pol_sf"/>
</dbReference>
<dbReference type="InterPro" id="IPR029104">
    <property type="entry name" value="HERV-K_env"/>
</dbReference>
<dbReference type="InterPro" id="IPR017856">
    <property type="entry name" value="Integrase-like_N"/>
</dbReference>
<dbReference type="InterPro" id="IPR036862">
    <property type="entry name" value="Integrase_C_dom_sf_retrovir"/>
</dbReference>
<dbReference type="InterPro" id="IPR001037">
    <property type="entry name" value="Integrase_C_retrovir"/>
</dbReference>
<dbReference type="InterPro" id="IPR001584">
    <property type="entry name" value="Integrase_cat-core"/>
</dbReference>
<dbReference type="InterPro" id="IPR003308">
    <property type="entry name" value="Integrase_Zn-bd_dom_N"/>
</dbReference>
<dbReference type="InterPro" id="IPR043128">
    <property type="entry name" value="Rev_trsase/Diguanyl_cyclase"/>
</dbReference>
<dbReference type="InterPro" id="IPR012337">
    <property type="entry name" value="RNaseH-like_sf"/>
</dbReference>
<dbReference type="InterPro" id="IPR002156">
    <property type="entry name" value="RNaseH_domain"/>
</dbReference>
<dbReference type="InterPro" id="IPR036397">
    <property type="entry name" value="RNaseH_sf"/>
</dbReference>
<dbReference type="InterPro" id="IPR000477">
    <property type="entry name" value="RT_dom"/>
</dbReference>
<dbReference type="InterPro" id="IPR010661">
    <property type="entry name" value="RVT_thumb"/>
</dbReference>
<dbReference type="PANTHER" id="PTHR41694:SF4">
    <property type="entry name" value="ENDOGENOUS RETROVIRUS GROUP K MEMBER 10 POL PROTEIN-RELATED"/>
    <property type="match status" value="1"/>
</dbReference>
<dbReference type="PANTHER" id="PTHR41694">
    <property type="entry name" value="ENDOGENOUS RETROVIRUS GROUP K MEMBER POL PROTEIN"/>
    <property type="match status" value="1"/>
</dbReference>
<dbReference type="Pfam" id="PF13804">
    <property type="entry name" value="HERV-K_env_2"/>
    <property type="match status" value="1"/>
</dbReference>
<dbReference type="Pfam" id="PF00552">
    <property type="entry name" value="IN_DBD_C"/>
    <property type="match status" value="1"/>
</dbReference>
<dbReference type="Pfam" id="PF02022">
    <property type="entry name" value="Integrase_Zn"/>
    <property type="match status" value="1"/>
</dbReference>
<dbReference type="Pfam" id="PF00075">
    <property type="entry name" value="RNase_H"/>
    <property type="match status" value="1"/>
</dbReference>
<dbReference type="Pfam" id="PF00665">
    <property type="entry name" value="rve"/>
    <property type="match status" value="1"/>
</dbReference>
<dbReference type="Pfam" id="PF00078">
    <property type="entry name" value="RVT_1"/>
    <property type="match status" value="1"/>
</dbReference>
<dbReference type="Pfam" id="PF06817">
    <property type="entry name" value="RVT_thumb"/>
    <property type="match status" value="1"/>
</dbReference>
<dbReference type="SUPFAM" id="SSF50122">
    <property type="entry name" value="DNA-binding domain of retroviral integrase"/>
    <property type="match status" value="1"/>
</dbReference>
<dbReference type="SUPFAM" id="SSF56672">
    <property type="entry name" value="DNA/RNA polymerases"/>
    <property type="match status" value="1"/>
</dbReference>
<dbReference type="SUPFAM" id="SSF46919">
    <property type="entry name" value="N-terminal Zn binding domain of HIV integrase"/>
    <property type="match status" value="1"/>
</dbReference>
<dbReference type="SUPFAM" id="SSF53098">
    <property type="entry name" value="Ribonuclease H-like"/>
    <property type="match status" value="2"/>
</dbReference>
<dbReference type="PROSITE" id="PS50994">
    <property type="entry name" value="INTEGRASE"/>
    <property type="match status" value="1"/>
</dbReference>
<dbReference type="PROSITE" id="PS51027">
    <property type="entry name" value="INTEGRASE_DBD"/>
    <property type="match status" value="1"/>
</dbReference>
<dbReference type="PROSITE" id="PS50879">
    <property type="entry name" value="RNASE_H_1"/>
    <property type="match status" value="1"/>
</dbReference>
<dbReference type="PROSITE" id="PS50878">
    <property type="entry name" value="RT_POL"/>
    <property type="match status" value="1"/>
</dbReference>
<dbReference type="PROSITE" id="PS50876">
    <property type="entry name" value="ZF_INTEGRASE"/>
    <property type="match status" value="1"/>
</dbReference>
<proteinExistence type="evidence at protein level"/>
<name>POK11_HUMAN</name>
<feature type="chain" id="PRO_0000186773" description="Endogenous retrovirus group K member 11 Pol protein">
    <location>
        <begin position="1"/>
        <end position="969"/>
    </location>
</feature>
<feature type="domain" description="Reverse transcriptase" evidence="2">
    <location>
        <begin position="57"/>
        <end position="245"/>
    </location>
</feature>
<feature type="domain" description="RNase H type-1" evidence="3">
    <location>
        <begin position="460"/>
        <end position="590"/>
    </location>
</feature>
<feature type="domain" description="Integrase catalytic" evidence="5">
    <location>
        <begin position="642"/>
        <end position="803"/>
    </location>
</feature>
<feature type="zinc finger region" description="Integrase-type" evidence="4">
    <location>
        <begin position="587"/>
        <end position="628"/>
    </location>
</feature>
<feature type="DNA-binding region" description="Integrase-type" evidence="6">
    <location>
        <begin position="811"/>
        <end position="859"/>
    </location>
</feature>
<feature type="short sequence motif" description="LPQG">
    <location>
        <begin position="161"/>
        <end position="164"/>
    </location>
</feature>
<feature type="binding site" evidence="3">
    <location>
        <position position="469"/>
    </location>
    <ligand>
        <name>Mg(2+)</name>
        <dbReference type="ChEBI" id="CHEBI:18420"/>
        <label>1</label>
    </ligand>
</feature>
<feature type="binding site" evidence="3">
    <location>
        <position position="469"/>
    </location>
    <ligand>
        <name>Mg(2+)</name>
        <dbReference type="ChEBI" id="CHEBI:18420"/>
        <label>2</label>
    </ligand>
</feature>
<feature type="binding site" evidence="3">
    <location>
        <position position="497"/>
    </location>
    <ligand>
        <name>Mg(2+)</name>
        <dbReference type="ChEBI" id="CHEBI:18420"/>
        <label>1</label>
    </ligand>
</feature>
<feature type="binding site" evidence="3">
    <location>
        <position position="517"/>
    </location>
    <ligand>
        <name>Mg(2+)</name>
        <dbReference type="ChEBI" id="CHEBI:18420"/>
        <label>1</label>
    </ligand>
</feature>
<feature type="binding site" evidence="3">
    <location>
        <position position="582"/>
    </location>
    <ligand>
        <name>Mg(2+)</name>
        <dbReference type="ChEBI" id="CHEBI:18420"/>
        <label>2</label>
    </ligand>
</feature>
<feature type="binding site" evidence="4">
    <location>
        <position position="596"/>
    </location>
    <ligand>
        <name>Zn(2+)</name>
        <dbReference type="ChEBI" id="CHEBI:29105"/>
    </ligand>
</feature>
<feature type="binding site" evidence="4">
    <location>
        <position position="600"/>
    </location>
    <ligand>
        <name>Zn(2+)</name>
        <dbReference type="ChEBI" id="CHEBI:29105"/>
    </ligand>
</feature>
<feature type="binding site" evidence="4">
    <location>
        <position position="624"/>
    </location>
    <ligand>
        <name>Zn(2+)</name>
        <dbReference type="ChEBI" id="CHEBI:29105"/>
    </ligand>
</feature>
<feature type="binding site" evidence="4">
    <location>
        <position position="627"/>
    </location>
    <ligand>
        <name>Zn(2+)</name>
        <dbReference type="ChEBI" id="CHEBI:29105"/>
    </ligand>
</feature>
<feature type="sequence conflict" description="In Ref. 2; AAC63292." evidence="7" ref="2">
    <original>N</original>
    <variation>Y</variation>
    <location>
        <position position="149"/>
    </location>
</feature>
<feature type="sequence conflict" description="In Ref. 2; AAC63290." evidence="7" ref="2">
    <original>S</original>
    <variation>N</variation>
    <location>
        <position position="168"/>
    </location>
</feature>
<feature type="sequence conflict" description="In Ref. 2; AAC63290." evidence="7" ref="2">
    <original>I</original>
    <variation>V</variation>
    <location>
        <position position="257"/>
    </location>
</feature>
<feature type="sequence conflict" description="In Ref. 2; AAC63290." evidence="7" ref="2">
    <original>SK</original>
    <variation>CQ</variation>
    <location>
        <begin position="304"/>
        <end position="305"/>
    </location>
</feature>
<feature type="sequence conflict" description="In Ref. 2; AAC63292." evidence="7" ref="2">
    <original>D</original>
    <variation>G</variation>
    <location>
        <position position="332"/>
    </location>
</feature>
<feature type="sequence conflict" description="In Ref. 2; AAC63292." evidence="7" ref="2">
    <original>I</original>
    <variation>T</variation>
    <location>
        <position position="391"/>
    </location>
</feature>
<feature type="sequence conflict" description="In Ref. 2; AAC63290/AAC63292." evidence="7" ref="2">
    <original>M</original>
    <variation>L</variation>
    <location>
        <position position="446"/>
    </location>
</feature>
<feature type="sequence conflict" description="In Ref. 2; AAC63290." evidence="7" ref="2">
    <original>T</original>
    <variation>NP</variation>
    <location>
        <position position="455"/>
    </location>
</feature>
<feature type="sequence conflict" description="In Ref. 2; AAC63290." evidence="7" ref="2">
    <original>R</original>
    <variation>E</variation>
    <location>
        <position position="456"/>
    </location>
</feature>
<feature type="sequence conflict" description="In Ref. 2; AAC63292." evidence="7" ref="2">
    <original>R</original>
    <variation>C</variation>
    <location>
        <position position="457"/>
    </location>
</feature>
<feature type="sequence conflict" description="In Ref. 2; AAC63290." evidence="7" ref="2">
    <original>E</original>
    <variation>G</variation>
    <location>
        <position position="461"/>
    </location>
</feature>
<feature type="sequence conflict" description="In Ref. 2; AAC63290." evidence="7" ref="2">
    <original>E</original>
    <variation>G</variation>
    <location>
        <position position="483"/>
    </location>
</feature>
<feature type="sequence conflict" description="In Ref. 2; AAC63290." evidence="7" ref="2">
    <original>I</original>
    <variation>L</variation>
    <location>
        <position position="590"/>
    </location>
</feature>
<feature type="sequence conflict" description="In Ref. 3; AAO27434." evidence="7" ref="3">
    <original>G</original>
    <variation>R</variation>
    <location>
        <position position="862"/>
    </location>
</feature>
<feature type="helix" evidence="8">
    <location>
        <begin position="43"/>
        <end position="59"/>
    </location>
</feature>
<feature type="strand" evidence="8">
    <location>
        <begin position="61"/>
        <end position="64"/>
    </location>
</feature>
<feature type="strand" evidence="8">
    <location>
        <begin position="73"/>
        <end position="77"/>
    </location>
</feature>
<feature type="strand" evidence="8">
    <location>
        <begin position="79"/>
        <end position="87"/>
    </location>
</feature>
<feature type="helix" evidence="8">
    <location>
        <begin position="90"/>
        <end position="93"/>
    </location>
</feature>
<feature type="helix" evidence="8">
    <location>
        <begin position="109"/>
        <end position="111"/>
    </location>
</feature>
<feature type="strand" evidence="8">
    <location>
        <begin position="118"/>
        <end position="123"/>
    </location>
</feature>
<feature type="helix" evidence="8">
    <location>
        <begin position="126"/>
        <end position="129"/>
    </location>
</feature>
<feature type="helix" evidence="8">
    <location>
        <begin position="134"/>
        <end position="139"/>
    </location>
</feature>
<feature type="strand" evidence="8">
    <location>
        <begin position="140"/>
        <end position="144"/>
    </location>
</feature>
<feature type="strand" evidence="8">
    <location>
        <begin position="154"/>
        <end position="160"/>
    </location>
</feature>
<feature type="helix" evidence="8">
    <location>
        <begin position="168"/>
        <end position="186"/>
    </location>
</feature>
<feature type="strand" evidence="8">
    <location>
        <begin position="190"/>
        <end position="195"/>
    </location>
</feature>
<feature type="strand" evidence="8">
    <location>
        <begin position="198"/>
        <end position="202"/>
    </location>
</feature>
<feature type="helix" evidence="8">
    <location>
        <begin position="206"/>
        <end position="222"/>
    </location>
</feature>
<feature type="strand" evidence="8">
    <location>
        <begin position="235"/>
        <end position="240"/>
    </location>
</feature>
<feature type="strand" evidence="8">
    <location>
        <begin position="243"/>
        <end position="245"/>
    </location>
</feature>
<feature type="strand" evidence="8">
    <location>
        <begin position="247"/>
        <end position="253"/>
    </location>
</feature>
<feature type="helix" evidence="8">
    <location>
        <begin position="265"/>
        <end position="282"/>
    </location>
</feature>
<feature type="helix" evidence="8">
    <location>
        <begin position="286"/>
        <end position="289"/>
    </location>
</feature>
<feature type="helix" evidence="8">
    <location>
        <begin position="290"/>
        <end position="295"/>
    </location>
</feature>
<feature type="helix" evidence="8">
    <location>
        <begin position="310"/>
        <end position="325"/>
    </location>
</feature>
<feature type="strand" evidence="8">
    <location>
        <begin position="333"/>
        <end position="335"/>
    </location>
</feature>
<feature type="strand" evidence="8">
    <location>
        <begin position="338"/>
        <end position="342"/>
    </location>
</feature>
<feature type="strand" evidence="8">
    <location>
        <begin position="344"/>
        <end position="347"/>
    </location>
</feature>
<feature type="strand" evidence="8">
    <location>
        <begin position="349"/>
        <end position="354"/>
    </location>
</feature>
<feature type="strand" evidence="8">
    <location>
        <begin position="357"/>
        <end position="362"/>
    </location>
</feature>
<feature type="strand" evidence="8">
    <location>
        <begin position="369"/>
        <end position="374"/>
    </location>
</feature>
<feature type="helix" evidence="8">
    <location>
        <begin position="375"/>
        <end position="394"/>
    </location>
</feature>
<feature type="strand" evidence="8">
    <location>
        <begin position="399"/>
        <end position="402"/>
    </location>
</feature>
<feature type="helix" evidence="8">
    <location>
        <begin position="407"/>
        <end position="416"/>
    </location>
</feature>
<feature type="helix" evidence="8">
    <location>
        <begin position="418"/>
        <end position="423"/>
    </location>
</feature>
<feature type="turn" evidence="8">
    <location>
        <begin position="424"/>
        <end position="426"/>
    </location>
</feature>
<feature type="strand" evidence="8">
    <location>
        <begin position="429"/>
        <end position="432"/>
    </location>
</feature>
<feature type="turn" evidence="8">
    <location>
        <begin position="440"/>
        <end position="443"/>
    </location>
</feature>
<feature type="strand" evidence="8">
    <location>
        <begin position="453"/>
        <end position="455"/>
    </location>
</feature>
<feature type="strand" evidence="8">
    <location>
        <begin position="464"/>
        <end position="470"/>
    </location>
</feature>
<feature type="strand" evidence="8">
    <location>
        <begin position="474"/>
        <end position="482"/>
    </location>
</feature>
<feature type="strand" evidence="8">
    <location>
        <begin position="484"/>
        <end position="487"/>
    </location>
</feature>
<feature type="helix" evidence="8">
    <location>
        <begin position="493"/>
        <end position="507"/>
    </location>
</feature>
<feature type="strand" evidence="8">
    <location>
        <begin position="512"/>
        <end position="517"/>
    </location>
</feature>
<feature type="helix" evidence="8">
    <location>
        <begin position="519"/>
        <end position="527"/>
    </location>
</feature>
<feature type="helix" evidence="8">
    <location>
        <begin position="528"/>
        <end position="530"/>
    </location>
</feature>
<feature type="strand" evidence="8">
    <location>
        <begin position="531"/>
        <end position="533"/>
    </location>
</feature>
<feature type="helix" evidence="8">
    <location>
        <begin position="539"/>
        <end position="553"/>
    </location>
</feature>
<feature type="strand" evidence="8">
    <location>
        <begin position="559"/>
        <end position="563"/>
    </location>
</feature>
<feature type="helix" evidence="8">
    <location>
        <begin position="573"/>
        <end position="584"/>
    </location>
</feature>
<comment type="function">
    <text evidence="1">Early post-infection, the reverse transcriptase converts the viral RNA genome into double-stranded viral DNA. The RNase H domain of the reverse transcriptase performs two functions. It degrades the RNA template and specifically removes the RNA primer from the RNA/DNA hybrid. Following nuclear import, the integrase catalyzes the insertion of the linear, double-stranded viral DNA into the host cell chromosome. Endogenous Pol proteins may have kept, lost or modified their original function during evolution (By similarity).</text>
</comment>
<comment type="catalytic activity">
    <reaction evidence="2">
        <text>DNA(n) + a 2'-deoxyribonucleoside 5'-triphosphate = DNA(n+1) + diphosphate</text>
        <dbReference type="Rhea" id="RHEA:22508"/>
        <dbReference type="Rhea" id="RHEA-COMP:17339"/>
        <dbReference type="Rhea" id="RHEA-COMP:17340"/>
        <dbReference type="ChEBI" id="CHEBI:33019"/>
        <dbReference type="ChEBI" id="CHEBI:61560"/>
        <dbReference type="ChEBI" id="CHEBI:173112"/>
        <dbReference type="EC" id="2.7.7.49"/>
    </reaction>
</comment>
<comment type="catalytic activity">
    <reaction evidence="3">
        <text>Endonucleolytic cleavage to 5'-phosphomonoester.</text>
        <dbReference type="EC" id="3.1.26.4"/>
    </reaction>
</comment>
<comment type="alternative products">
    <event type="ribosomal frameshifting"/>
    <isoform>
        <id>Q9UQG0-1</id>
        <name>1</name>
        <sequence type="displayed"/>
    </isoform>
    <text>This protein is synthesized as Gag-Pro and Gag-Pro-Pol polyprotein precursors. These polyproteins are thought, by similarity with type-B retroviruses, to be generated by -1 frameshifts occurring at the Gag-Pro and Pro-Pol genes boundaries.</text>
</comment>
<comment type="domain">
    <text>The LPQG and YXDD motifs are catalytically important and conserved among many retroviruses.</text>
</comment>
<comment type="miscellaneous">
    <text>Exact N-terminus of this protein has not been formally described.</text>
</comment>
<comment type="miscellaneous">
    <text>The 102 C-terminal amino acids differ from HERV-K(HML-2) Pol prototype due to a frameshift in position 867.</text>
</comment>
<comment type="similarity">
    <text evidence="7">Belongs to the beta type-B retroviral polymerase family. HERV class-II K(HML-2) pol subfamily.</text>
</comment>
<organism>
    <name type="scientific">Homo sapiens</name>
    <name type="common">Human</name>
    <dbReference type="NCBI Taxonomy" id="9606"/>
    <lineage>
        <taxon>Eukaryota</taxon>
        <taxon>Metazoa</taxon>
        <taxon>Chordata</taxon>
        <taxon>Craniata</taxon>
        <taxon>Vertebrata</taxon>
        <taxon>Euteleostomi</taxon>
        <taxon>Mammalia</taxon>
        <taxon>Eutheria</taxon>
        <taxon>Euarchontoglires</taxon>
        <taxon>Primates</taxon>
        <taxon>Haplorrhini</taxon>
        <taxon>Catarrhini</taxon>
        <taxon>Hominidae</taxon>
        <taxon>Homo</taxon>
    </lineage>
</organism>
<reference key="1">
    <citation type="journal article" date="2006" name="Nature">
        <title>The DNA sequence, annotation and analysis of human chromosome 3.</title>
        <authorList>
            <person name="Muzny D.M."/>
            <person name="Scherer S.E."/>
            <person name="Kaul R."/>
            <person name="Wang J."/>
            <person name="Yu J."/>
            <person name="Sudbrak R."/>
            <person name="Buhay C.J."/>
            <person name="Chen R."/>
            <person name="Cree A."/>
            <person name="Ding Y."/>
            <person name="Dugan-Rocha S."/>
            <person name="Gill R."/>
            <person name="Gunaratne P."/>
            <person name="Harris R.A."/>
            <person name="Hawes A.C."/>
            <person name="Hernandez J."/>
            <person name="Hodgson A.V."/>
            <person name="Hume J."/>
            <person name="Jackson A."/>
            <person name="Khan Z.M."/>
            <person name="Kovar-Smith C."/>
            <person name="Lewis L.R."/>
            <person name="Lozado R.J."/>
            <person name="Metzker M.L."/>
            <person name="Milosavljevic A."/>
            <person name="Miner G.R."/>
            <person name="Morgan M.B."/>
            <person name="Nazareth L.V."/>
            <person name="Scott G."/>
            <person name="Sodergren E."/>
            <person name="Song X.-Z."/>
            <person name="Steffen D."/>
            <person name="Wei S."/>
            <person name="Wheeler D.A."/>
            <person name="Wright M.W."/>
            <person name="Worley K.C."/>
            <person name="Yuan Y."/>
            <person name="Zhang Z."/>
            <person name="Adams C.Q."/>
            <person name="Ansari-Lari M.A."/>
            <person name="Ayele M."/>
            <person name="Brown M.J."/>
            <person name="Chen G."/>
            <person name="Chen Z."/>
            <person name="Clendenning J."/>
            <person name="Clerc-Blankenburg K.P."/>
            <person name="Chen R."/>
            <person name="Chen Z."/>
            <person name="Davis C."/>
            <person name="Delgado O."/>
            <person name="Dinh H.H."/>
            <person name="Dong W."/>
            <person name="Draper H."/>
            <person name="Ernst S."/>
            <person name="Fu G."/>
            <person name="Gonzalez-Garay M.L."/>
            <person name="Garcia D.K."/>
            <person name="Gillett W."/>
            <person name="Gu J."/>
            <person name="Hao B."/>
            <person name="Haugen E."/>
            <person name="Havlak P."/>
            <person name="He X."/>
            <person name="Hennig S."/>
            <person name="Hu S."/>
            <person name="Huang W."/>
            <person name="Jackson L.R."/>
            <person name="Jacob L.S."/>
            <person name="Kelly S.H."/>
            <person name="Kube M."/>
            <person name="Levy R."/>
            <person name="Li Z."/>
            <person name="Liu B."/>
            <person name="Liu J."/>
            <person name="Liu W."/>
            <person name="Lu J."/>
            <person name="Maheshwari M."/>
            <person name="Nguyen B.-V."/>
            <person name="Okwuonu G.O."/>
            <person name="Palmeiri A."/>
            <person name="Pasternak S."/>
            <person name="Perez L.M."/>
            <person name="Phelps K.A."/>
            <person name="Plopper F.J."/>
            <person name="Qiang B."/>
            <person name="Raymond C."/>
            <person name="Rodriguez R."/>
            <person name="Saenphimmachak C."/>
            <person name="Santibanez J."/>
            <person name="Shen H."/>
            <person name="Shen Y."/>
            <person name="Subramanian S."/>
            <person name="Tabor P.E."/>
            <person name="Verduzco D."/>
            <person name="Waldron L."/>
            <person name="Wang J."/>
            <person name="Wang J."/>
            <person name="Wang Q."/>
            <person name="Williams G.A."/>
            <person name="Wong G.K.-S."/>
            <person name="Yao Z."/>
            <person name="Zhang J."/>
            <person name="Zhang X."/>
            <person name="Zhao G."/>
            <person name="Zhou J."/>
            <person name="Zhou Y."/>
            <person name="Nelson D."/>
            <person name="Lehrach H."/>
            <person name="Reinhardt R."/>
            <person name="Naylor S.L."/>
            <person name="Yang H."/>
            <person name="Olson M."/>
            <person name="Weinstock G."/>
            <person name="Gibbs R.A."/>
        </authorList>
    </citation>
    <scope>NUCLEOTIDE SEQUENCE [LARGE SCALE GENOMIC DNA]</scope>
</reference>
<reference key="2">
    <citation type="journal article" date="1999" name="J. Virol.">
        <title>Identification of an active reverse transcriptase enzyme encoded by a human endogenous HERV-K retrovirus.</title>
        <authorList>
            <person name="Berkhout B."/>
            <person name="Jebbink M."/>
            <person name="Zsiros J."/>
        </authorList>
    </citation>
    <scope>NUCLEOTIDE SEQUENCE [MRNA] OF 2-597</scope>
</reference>
<reference key="3">
    <citation type="submission" date="2002-11" db="EMBL/GenBank/DDBJ databases">
        <title>Melanoma associated endogenous retrovirus.</title>
        <authorList>
            <person name="Hirschl S."/>
            <person name="Muster T."/>
        </authorList>
    </citation>
    <scope>NUCLEOTIDE SEQUENCE [GENOMIC DNA] OF 138-864</scope>
</reference>